<dbReference type="EMBL" id="AE005174">
    <property type="protein sequence ID" value="AAG56703.1"/>
    <property type="molecule type" value="Genomic_DNA"/>
</dbReference>
<dbReference type="EMBL" id="BA000007">
    <property type="protein sequence ID" value="BAB35846.1"/>
    <property type="molecule type" value="Genomic_DNA"/>
</dbReference>
<dbReference type="PIR" id="C85780">
    <property type="entry name" value="C85780"/>
</dbReference>
<dbReference type="PIR" id="G90931">
    <property type="entry name" value="G90931"/>
</dbReference>
<dbReference type="RefSeq" id="NP_310450.1">
    <property type="nucleotide sequence ID" value="NC_002695.1"/>
</dbReference>
<dbReference type="RefSeq" id="WP_000124850.1">
    <property type="nucleotide sequence ID" value="NZ_VOAI01000007.1"/>
</dbReference>
<dbReference type="SMR" id="P0A7L5"/>
<dbReference type="STRING" id="155864.Z2745"/>
<dbReference type="GeneID" id="912729"/>
<dbReference type="GeneID" id="98388757"/>
<dbReference type="KEGG" id="ece:Z2745"/>
<dbReference type="KEGG" id="ecs:ECs_2423"/>
<dbReference type="PATRIC" id="fig|386585.9.peg.2536"/>
<dbReference type="eggNOG" id="COG0292">
    <property type="taxonomic scope" value="Bacteria"/>
</dbReference>
<dbReference type="HOGENOM" id="CLU_123265_0_1_6"/>
<dbReference type="OMA" id="GRRKNVW"/>
<dbReference type="Proteomes" id="UP000000558">
    <property type="component" value="Chromosome"/>
</dbReference>
<dbReference type="Proteomes" id="UP000002519">
    <property type="component" value="Chromosome"/>
</dbReference>
<dbReference type="GO" id="GO:1990904">
    <property type="term" value="C:ribonucleoprotein complex"/>
    <property type="evidence" value="ECO:0007669"/>
    <property type="project" value="UniProtKB-KW"/>
</dbReference>
<dbReference type="GO" id="GO:0005840">
    <property type="term" value="C:ribosome"/>
    <property type="evidence" value="ECO:0007669"/>
    <property type="project" value="UniProtKB-KW"/>
</dbReference>
<dbReference type="GO" id="GO:0019843">
    <property type="term" value="F:rRNA binding"/>
    <property type="evidence" value="ECO:0007669"/>
    <property type="project" value="UniProtKB-UniRule"/>
</dbReference>
<dbReference type="GO" id="GO:0003735">
    <property type="term" value="F:structural constituent of ribosome"/>
    <property type="evidence" value="ECO:0007669"/>
    <property type="project" value="InterPro"/>
</dbReference>
<dbReference type="GO" id="GO:0000027">
    <property type="term" value="P:ribosomal large subunit assembly"/>
    <property type="evidence" value="ECO:0007669"/>
    <property type="project" value="UniProtKB-UniRule"/>
</dbReference>
<dbReference type="GO" id="GO:0006412">
    <property type="term" value="P:translation"/>
    <property type="evidence" value="ECO:0007669"/>
    <property type="project" value="InterPro"/>
</dbReference>
<dbReference type="CDD" id="cd07026">
    <property type="entry name" value="Ribosomal_L20"/>
    <property type="match status" value="1"/>
</dbReference>
<dbReference type="FunFam" id="1.10.1900.20:FF:000001">
    <property type="entry name" value="50S ribosomal protein L20"/>
    <property type="match status" value="1"/>
</dbReference>
<dbReference type="Gene3D" id="6.10.160.10">
    <property type="match status" value="1"/>
</dbReference>
<dbReference type="Gene3D" id="1.10.1900.20">
    <property type="entry name" value="Ribosomal protein L20"/>
    <property type="match status" value="1"/>
</dbReference>
<dbReference type="HAMAP" id="MF_00382">
    <property type="entry name" value="Ribosomal_bL20"/>
    <property type="match status" value="1"/>
</dbReference>
<dbReference type="InterPro" id="IPR005813">
    <property type="entry name" value="Ribosomal_bL20"/>
</dbReference>
<dbReference type="InterPro" id="IPR049946">
    <property type="entry name" value="RIBOSOMAL_L20_CS"/>
</dbReference>
<dbReference type="InterPro" id="IPR035566">
    <property type="entry name" value="Ribosomal_protein_bL20_C"/>
</dbReference>
<dbReference type="NCBIfam" id="TIGR01032">
    <property type="entry name" value="rplT_bact"/>
    <property type="match status" value="1"/>
</dbReference>
<dbReference type="PANTHER" id="PTHR10986">
    <property type="entry name" value="39S RIBOSOMAL PROTEIN L20"/>
    <property type="match status" value="1"/>
</dbReference>
<dbReference type="Pfam" id="PF00453">
    <property type="entry name" value="Ribosomal_L20"/>
    <property type="match status" value="1"/>
</dbReference>
<dbReference type="PRINTS" id="PR00062">
    <property type="entry name" value="RIBOSOMALL20"/>
</dbReference>
<dbReference type="SUPFAM" id="SSF74731">
    <property type="entry name" value="Ribosomal protein L20"/>
    <property type="match status" value="1"/>
</dbReference>
<dbReference type="PROSITE" id="PS00937">
    <property type="entry name" value="RIBOSOMAL_L20"/>
    <property type="match status" value="1"/>
</dbReference>
<protein>
    <recommendedName>
        <fullName evidence="2">Large ribosomal subunit protein bL20</fullName>
    </recommendedName>
    <alternativeName>
        <fullName>50S ribosomal protein L20</fullName>
    </alternativeName>
</protein>
<name>RL20_ECO57</name>
<feature type="initiator methionine" description="Removed" evidence="1">
    <location>
        <position position="1"/>
    </location>
</feature>
<feature type="chain" id="PRO_0000177157" description="Large ribosomal subunit protein bL20">
    <location>
        <begin position="2"/>
        <end position="118"/>
    </location>
</feature>
<keyword id="KW-1185">Reference proteome</keyword>
<keyword id="KW-0687">Ribonucleoprotein</keyword>
<keyword id="KW-0689">Ribosomal protein</keyword>
<keyword id="KW-0694">RNA-binding</keyword>
<keyword id="KW-0699">rRNA-binding</keyword>
<sequence>MARVKRGVIARARHKKILKQAKGYYGARSRVYRVAFQAVIKAGQYAYRDRRQRKRQFRQLWIARINAAARQNGISYSKFINGLKKASVEIDRKILADIAVFDKVAFTALVEKAKAALA</sequence>
<proteinExistence type="inferred from homology"/>
<organism>
    <name type="scientific">Escherichia coli O157:H7</name>
    <dbReference type="NCBI Taxonomy" id="83334"/>
    <lineage>
        <taxon>Bacteria</taxon>
        <taxon>Pseudomonadati</taxon>
        <taxon>Pseudomonadota</taxon>
        <taxon>Gammaproteobacteria</taxon>
        <taxon>Enterobacterales</taxon>
        <taxon>Enterobacteriaceae</taxon>
        <taxon>Escherichia</taxon>
    </lineage>
</organism>
<reference key="1">
    <citation type="journal article" date="2001" name="Nature">
        <title>Genome sequence of enterohaemorrhagic Escherichia coli O157:H7.</title>
        <authorList>
            <person name="Perna N.T."/>
            <person name="Plunkett G. III"/>
            <person name="Burland V."/>
            <person name="Mau B."/>
            <person name="Glasner J.D."/>
            <person name="Rose D.J."/>
            <person name="Mayhew G.F."/>
            <person name="Evans P.S."/>
            <person name="Gregor J."/>
            <person name="Kirkpatrick H.A."/>
            <person name="Posfai G."/>
            <person name="Hackett J."/>
            <person name="Klink S."/>
            <person name="Boutin A."/>
            <person name="Shao Y."/>
            <person name="Miller L."/>
            <person name="Grotbeck E.J."/>
            <person name="Davis N.W."/>
            <person name="Lim A."/>
            <person name="Dimalanta E.T."/>
            <person name="Potamousis K."/>
            <person name="Apodaca J."/>
            <person name="Anantharaman T.S."/>
            <person name="Lin J."/>
            <person name="Yen G."/>
            <person name="Schwartz D.C."/>
            <person name="Welch R.A."/>
            <person name="Blattner F.R."/>
        </authorList>
    </citation>
    <scope>NUCLEOTIDE SEQUENCE [LARGE SCALE GENOMIC DNA]</scope>
    <source>
        <strain>O157:H7 / EDL933 / ATCC 700927 / EHEC</strain>
    </source>
</reference>
<reference key="2">
    <citation type="journal article" date="2001" name="DNA Res.">
        <title>Complete genome sequence of enterohemorrhagic Escherichia coli O157:H7 and genomic comparison with a laboratory strain K-12.</title>
        <authorList>
            <person name="Hayashi T."/>
            <person name="Makino K."/>
            <person name="Ohnishi M."/>
            <person name="Kurokawa K."/>
            <person name="Ishii K."/>
            <person name="Yokoyama K."/>
            <person name="Han C.-G."/>
            <person name="Ohtsubo E."/>
            <person name="Nakayama K."/>
            <person name="Murata T."/>
            <person name="Tanaka M."/>
            <person name="Tobe T."/>
            <person name="Iida T."/>
            <person name="Takami H."/>
            <person name="Honda T."/>
            <person name="Sasakawa C."/>
            <person name="Ogasawara N."/>
            <person name="Yasunaga T."/>
            <person name="Kuhara S."/>
            <person name="Shiba T."/>
            <person name="Hattori M."/>
            <person name="Shinagawa H."/>
        </authorList>
    </citation>
    <scope>NUCLEOTIDE SEQUENCE [LARGE SCALE GENOMIC DNA]</scope>
    <source>
        <strain>O157:H7 / Sakai / RIMD 0509952 / EHEC</strain>
    </source>
</reference>
<evidence type="ECO:0000250" key="1"/>
<evidence type="ECO:0000305" key="2"/>
<gene>
    <name type="primary">rplT</name>
    <name type="ordered locus">Z2745</name>
    <name type="ordered locus">ECs2423</name>
</gene>
<comment type="function">
    <text evidence="1">Binds directly to 23S ribosomal RNA and is necessary for the in vitro assembly process of the 50S ribosomal subunit. It is not involved in the protein synthesizing functions of that subunit (By similarity).</text>
</comment>
<comment type="similarity">
    <text evidence="2">Belongs to the bacterial ribosomal protein bL20 family.</text>
</comment>
<accession>P0A7L5</accession>
<accession>P02421</accession>
<accession>Q47253</accession>